<feature type="chain" id="PRO_1000047527" description="Glycine--tRNA ligase alpha subunit">
    <location>
        <begin position="1"/>
        <end position="305"/>
    </location>
</feature>
<protein>
    <recommendedName>
        <fullName evidence="1">Glycine--tRNA ligase alpha subunit</fullName>
        <ecNumber evidence="1">6.1.1.14</ecNumber>
    </recommendedName>
    <alternativeName>
        <fullName evidence="1">Glycyl-tRNA synthetase alpha subunit</fullName>
        <shortName evidence="1">GlyRS</shortName>
    </alternativeName>
</protein>
<sequence length="305" mass="34945">MQKYDIKTFQGMILALQDYWAQNGCTIVQPLDMEVGAGTSHPMTCLRALGPEPMSTAYVQPSRRPTDGRYGENPNRLQHYYQFQVALKPSPDNIQELYLGSLEVLGVDPLVHDIRFVEDNWENPTLGAWGLGWEVWLNGMEVTQFTYFQQVGGLECKPVTGEITYGIERLAMYIQEVDSVYDLVWNIAPDGSKVTYGDIFHQNEVEQSTYNFEHADVEFLFGFFEQCEKECKELLELEKPLPLPAYERILKAGHAFNLLDARKAISVTERQRYILRIRNLTKAVAEAYYASREALGFPMCKKEQA</sequence>
<proteinExistence type="inferred from homology"/>
<accession>A7N1D9</accession>
<dbReference type="EC" id="6.1.1.14" evidence="1"/>
<dbReference type="EMBL" id="CP000789">
    <property type="protein sequence ID" value="ABU69465.1"/>
    <property type="molecule type" value="Genomic_DNA"/>
</dbReference>
<dbReference type="RefSeq" id="WP_005440855.1">
    <property type="nucleotide sequence ID" value="NC_022269.1"/>
</dbReference>
<dbReference type="SMR" id="A7N1D9"/>
<dbReference type="GeneID" id="67375737"/>
<dbReference type="KEGG" id="vha:VIBHAR_00450"/>
<dbReference type="PATRIC" id="fig|338187.25.peg.2140"/>
<dbReference type="Proteomes" id="UP000008152">
    <property type="component" value="Chromosome I"/>
</dbReference>
<dbReference type="GO" id="GO:0005829">
    <property type="term" value="C:cytosol"/>
    <property type="evidence" value="ECO:0007669"/>
    <property type="project" value="TreeGrafter"/>
</dbReference>
<dbReference type="GO" id="GO:0005524">
    <property type="term" value="F:ATP binding"/>
    <property type="evidence" value="ECO:0007669"/>
    <property type="project" value="UniProtKB-UniRule"/>
</dbReference>
<dbReference type="GO" id="GO:0004820">
    <property type="term" value="F:glycine-tRNA ligase activity"/>
    <property type="evidence" value="ECO:0007669"/>
    <property type="project" value="UniProtKB-UniRule"/>
</dbReference>
<dbReference type="GO" id="GO:0006426">
    <property type="term" value="P:glycyl-tRNA aminoacylation"/>
    <property type="evidence" value="ECO:0007669"/>
    <property type="project" value="UniProtKB-UniRule"/>
</dbReference>
<dbReference type="CDD" id="cd00733">
    <property type="entry name" value="GlyRS_alpha_core"/>
    <property type="match status" value="1"/>
</dbReference>
<dbReference type="FunFam" id="3.30.930.10:FF:000006">
    <property type="entry name" value="Glycine--tRNA ligase alpha subunit"/>
    <property type="match status" value="1"/>
</dbReference>
<dbReference type="Gene3D" id="3.30.930.10">
    <property type="entry name" value="Bira Bifunctional Protein, Domain 2"/>
    <property type="match status" value="1"/>
</dbReference>
<dbReference type="Gene3D" id="1.20.58.180">
    <property type="entry name" value="Class II aaRS and biotin synthetases, domain 2"/>
    <property type="match status" value="1"/>
</dbReference>
<dbReference type="HAMAP" id="MF_00254">
    <property type="entry name" value="Gly_tRNA_synth_alpha"/>
    <property type="match status" value="1"/>
</dbReference>
<dbReference type="InterPro" id="IPR045864">
    <property type="entry name" value="aa-tRNA-synth_II/BPL/LPL"/>
</dbReference>
<dbReference type="InterPro" id="IPR006194">
    <property type="entry name" value="Gly-tRNA-synth_heterodimer"/>
</dbReference>
<dbReference type="InterPro" id="IPR002310">
    <property type="entry name" value="Gly-tRNA_ligase_asu"/>
</dbReference>
<dbReference type="NCBIfam" id="TIGR00388">
    <property type="entry name" value="glyQ"/>
    <property type="match status" value="1"/>
</dbReference>
<dbReference type="NCBIfam" id="NF006827">
    <property type="entry name" value="PRK09348.1"/>
    <property type="match status" value="1"/>
</dbReference>
<dbReference type="PANTHER" id="PTHR30075:SF2">
    <property type="entry name" value="GLYCINE--TRNA LIGASE, CHLOROPLASTIC_MITOCHONDRIAL 2"/>
    <property type="match status" value="1"/>
</dbReference>
<dbReference type="PANTHER" id="PTHR30075">
    <property type="entry name" value="GLYCYL-TRNA SYNTHETASE"/>
    <property type="match status" value="1"/>
</dbReference>
<dbReference type="Pfam" id="PF02091">
    <property type="entry name" value="tRNA-synt_2e"/>
    <property type="match status" value="1"/>
</dbReference>
<dbReference type="PRINTS" id="PR01044">
    <property type="entry name" value="TRNASYNTHGA"/>
</dbReference>
<dbReference type="SUPFAM" id="SSF55681">
    <property type="entry name" value="Class II aaRS and biotin synthetases"/>
    <property type="match status" value="1"/>
</dbReference>
<dbReference type="PROSITE" id="PS50861">
    <property type="entry name" value="AA_TRNA_LIGASE_II_GLYAB"/>
    <property type="match status" value="1"/>
</dbReference>
<comment type="catalytic activity">
    <reaction evidence="1">
        <text>tRNA(Gly) + glycine + ATP = glycyl-tRNA(Gly) + AMP + diphosphate</text>
        <dbReference type="Rhea" id="RHEA:16013"/>
        <dbReference type="Rhea" id="RHEA-COMP:9664"/>
        <dbReference type="Rhea" id="RHEA-COMP:9683"/>
        <dbReference type="ChEBI" id="CHEBI:30616"/>
        <dbReference type="ChEBI" id="CHEBI:33019"/>
        <dbReference type="ChEBI" id="CHEBI:57305"/>
        <dbReference type="ChEBI" id="CHEBI:78442"/>
        <dbReference type="ChEBI" id="CHEBI:78522"/>
        <dbReference type="ChEBI" id="CHEBI:456215"/>
        <dbReference type="EC" id="6.1.1.14"/>
    </reaction>
</comment>
<comment type="subunit">
    <text evidence="1">Tetramer of two alpha and two beta subunits.</text>
</comment>
<comment type="subcellular location">
    <subcellularLocation>
        <location evidence="1">Cytoplasm</location>
    </subcellularLocation>
</comment>
<comment type="similarity">
    <text evidence="1">Belongs to the class-II aminoacyl-tRNA synthetase family.</text>
</comment>
<reference key="1">
    <citation type="submission" date="2007-08" db="EMBL/GenBank/DDBJ databases">
        <authorList>
            <consortium name="The Vibrio harveyi Genome Sequencing Project"/>
            <person name="Bassler B."/>
            <person name="Clifton S.W."/>
            <person name="Fulton L."/>
            <person name="Delehaunty K."/>
            <person name="Fronick C."/>
            <person name="Harrison M."/>
            <person name="Markivic C."/>
            <person name="Fulton R."/>
            <person name="Tin-Wollam A.-M."/>
            <person name="Shah N."/>
            <person name="Pepin K."/>
            <person name="Nash W."/>
            <person name="Thiruvilangam P."/>
            <person name="Bhonagiri V."/>
            <person name="Waters C."/>
            <person name="Tu K.C."/>
            <person name="Irgon J."/>
            <person name="Wilson R.K."/>
        </authorList>
    </citation>
    <scope>NUCLEOTIDE SEQUENCE [LARGE SCALE GENOMIC DNA]</scope>
    <source>
        <strain>ATCC BAA-1116 / BB120</strain>
    </source>
</reference>
<name>SYGA_VIBC1</name>
<keyword id="KW-0030">Aminoacyl-tRNA synthetase</keyword>
<keyword id="KW-0067">ATP-binding</keyword>
<keyword id="KW-0963">Cytoplasm</keyword>
<keyword id="KW-0436">Ligase</keyword>
<keyword id="KW-0547">Nucleotide-binding</keyword>
<keyword id="KW-0648">Protein biosynthesis</keyword>
<evidence type="ECO:0000255" key="1">
    <source>
        <dbReference type="HAMAP-Rule" id="MF_00254"/>
    </source>
</evidence>
<gene>
    <name evidence="1" type="primary">glyQ</name>
    <name type="ordered locus">VIBHAR_00450</name>
</gene>
<organism>
    <name type="scientific">Vibrio campbellii (strain ATCC BAA-1116)</name>
    <dbReference type="NCBI Taxonomy" id="2902295"/>
    <lineage>
        <taxon>Bacteria</taxon>
        <taxon>Pseudomonadati</taxon>
        <taxon>Pseudomonadota</taxon>
        <taxon>Gammaproteobacteria</taxon>
        <taxon>Vibrionales</taxon>
        <taxon>Vibrionaceae</taxon>
        <taxon>Vibrio</taxon>
    </lineage>
</organism>